<feature type="chain" id="PRO_0000239046" description="Large ribosomal subunit protein bL36">
    <location>
        <begin position="1"/>
        <end position="41"/>
    </location>
</feature>
<protein>
    <recommendedName>
        <fullName evidence="1">Large ribosomal subunit protein bL36</fullName>
    </recommendedName>
    <alternativeName>
        <fullName evidence="2">50S ribosomal protein L36</fullName>
    </alternativeName>
</protein>
<accession>Q2K4E7</accession>
<sequence length="41" mass="4991">MKIKNSLKSLKARHRDNRLVRRKGRIYIINKLNPRYKARQG</sequence>
<proteinExistence type="inferred from homology"/>
<evidence type="ECO:0000255" key="1">
    <source>
        <dbReference type="HAMAP-Rule" id="MF_00251"/>
    </source>
</evidence>
<evidence type="ECO:0000305" key="2"/>
<reference key="1">
    <citation type="journal article" date="2006" name="Proc. Natl. Acad. Sci. U.S.A.">
        <title>The partitioned Rhizobium etli genome: genetic and metabolic redundancy in seven interacting replicons.</title>
        <authorList>
            <person name="Gonzalez V."/>
            <person name="Santamaria R.I."/>
            <person name="Bustos P."/>
            <person name="Hernandez-Gonzalez I."/>
            <person name="Medrano-Soto A."/>
            <person name="Moreno-Hagelsieb G."/>
            <person name="Janga S.C."/>
            <person name="Ramirez M.A."/>
            <person name="Jimenez-Jacinto V."/>
            <person name="Collado-Vides J."/>
            <person name="Davila G."/>
        </authorList>
    </citation>
    <scope>NUCLEOTIDE SEQUENCE [LARGE SCALE GENOMIC DNA]</scope>
    <source>
        <strain>ATCC 51251 / DSM 11541 / JCM 21823 / NBRC 15573 / CFN 42</strain>
    </source>
</reference>
<keyword id="KW-1185">Reference proteome</keyword>
<keyword id="KW-0687">Ribonucleoprotein</keyword>
<keyword id="KW-0689">Ribosomal protein</keyword>
<name>RL36_RHIEC</name>
<organism>
    <name type="scientific">Rhizobium etli (strain ATCC 51251 / DSM 11541 / JCM 21823 / NBRC 15573 / CFN 42)</name>
    <dbReference type="NCBI Taxonomy" id="347834"/>
    <lineage>
        <taxon>Bacteria</taxon>
        <taxon>Pseudomonadati</taxon>
        <taxon>Pseudomonadota</taxon>
        <taxon>Alphaproteobacteria</taxon>
        <taxon>Hyphomicrobiales</taxon>
        <taxon>Rhizobiaceae</taxon>
        <taxon>Rhizobium/Agrobacterium group</taxon>
        <taxon>Rhizobium</taxon>
    </lineage>
</organism>
<dbReference type="EMBL" id="CP000133">
    <property type="protein sequence ID" value="ABC92289.1"/>
    <property type="molecule type" value="Genomic_DNA"/>
</dbReference>
<dbReference type="SMR" id="Q2K4E7"/>
<dbReference type="KEGG" id="ret:RHE_CH03534"/>
<dbReference type="eggNOG" id="COG0257">
    <property type="taxonomic scope" value="Bacteria"/>
</dbReference>
<dbReference type="HOGENOM" id="CLU_135723_3_0_5"/>
<dbReference type="OrthoDB" id="9801558at2"/>
<dbReference type="Proteomes" id="UP000001936">
    <property type="component" value="Chromosome"/>
</dbReference>
<dbReference type="GO" id="GO:1990904">
    <property type="term" value="C:ribonucleoprotein complex"/>
    <property type="evidence" value="ECO:0007669"/>
    <property type="project" value="UniProtKB-KW"/>
</dbReference>
<dbReference type="GO" id="GO:0005840">
    <property type="term" value="C:ribosome"/>
    <property type="evidence" value="ECO:0007669"/>
    <property type="project" value="UniProtKB-KW"/>
</dbReference>
<dbReference type="GO" id="GO:0003735">
    <property type="term" value="F:structural constituent of ribosome"/>
    <property type="evidence" value="ECO:0007669"/>
    <property type="project" value="InterPro"/>
</dbReference>
<dbReference type="GO" id="GO:0006412">
    <property type="term" value="P:translation"/>
    <property type="evidence" value="ECO:0007669"/>
    <property type="project" value="UniProtKB-UniRule"/>
</dbReference>
<dbReference type="HAMAP" id="MF_00251">
    <property type="entry name" value="Ribosomal_bL36"/>
    <property type="match status" value="1"/>
</dbReference>
<dbReference type="InterPro" id="IPR000473">
    <property type="entry name" value="Ribosomal_bL36"/>
</dbReference>
<dbReference type="InterPro" id="IPR035977">
    <property type="entry name" value="Ribosomal_bL36_sp"/>
</dbReference>
<dbReference type="InterPro" id="IPR047621">
    <property type="entry name" value="Ribosomal_L36_bact"/>
</dbReference>
<dbReference type="NCBIfam" id="NF002021">
    <property type="entry name" value="PRK00831.1"/>
    <property type="match status" value="1"/>
</dbReference>
<dbReference type="NCBIfam" id="TIGR01022">
    <property type="entry name" value="rpmJ_bact"/>
    <property type="match status" value="1"/>
</dbReference>
<dbReference type="PANTHER" id="PTHR47781">
    <property type="entry name" value="50S RIBOSOMAL PROTEIN L36 2"/>
    <property type="match status" value="1"/>
</dbReference>
<dbReference type="PANTHER" id="PTHR47781:SF1">
    <property type="entry name" value="LARGE RIBOSOMAL SUBUNIT PROTEIN BL36B"/>
    <property type="match status" value="1"/>
</dbReference>
<dbReference type="Pfam" id="PF00444">
    <property type="entry name" value="Ribosomal_L36"/>
    <property type="match status" value="1"/>
</dbReference>
<dbReference type="SUPFAM" id="SSF57840">
    <property type="entry name" value="Ribosomal protein L36"/>
    <property type="match status" value="1"/>
</dbReference>
<comment type="similarity">
    <text evidence="1">Belongs to the bacterial ribosomal protein bL36 family.</text>
</comment>
<gene>
    <name evidence="1" type="primary">rpmJ</name>
    <name type="ordered locus">RHE_CH03534</name>
</gene>